<protein>
    <recommendedName>
        <fullName evidence="1">Endoribonuclease YbeY</fullName>
        <ecNumber evidence="1">3.1.-.-</ecNumber>
    </recommendedName>
</protein>
<evidence type="ECO:0000255" key="1">
    <source>
        <dbReference type="HAMAP-Rule" id="MF_00009"/>
    </source>
</evidence>
<organism>
    <name type="scientific">Pseudomonas entomophila (strain L48)</name>
    <dbReference type="NCBI Taxonomy" id="384676"/>
    <lineage>
        <taxon>Bacteria</taxon>
        <taxon>Pseudomonadati</taxon>
        <taxon>Pseudomonadota</taxon>
        <taxon>Gammaproteobacteria</taxon>
        <taxon>Pseudomonadales</taxon>
        <taxon>Pseudomonadaceae</taxon>
        <taxon>Pseudomonas</taxon>
    </lineage>
</organism>
<feature type="chain" id="PRO_0000284276" description="Endoribonuclease YbeY">
    <location>
        <begin position="1"/>
        <end position="157"/>
    </location>
</feature>
<feature type="binding site" evidence="1">
    <location>
        <position position="111"/>
    </location>
    <ligand>
        <name>Zn(2+)</name>
        <dbReference type="ChEBI" id="CHEBI:29105"/>
        <note>catalytic</note>
    </ligand>
</feature>
<feature type="binding site" evidence="1">
    <location>
        <position position="115"/>
    </location>
    <ligand>
        <name>Zn(2+)</name>
        <dbReference type="ChEBI" id="CHEBI:29105"/>
        <note>catalytic</note>
    </ligand>
</feature>
<feature type="binding site" evidence="1">
    <location>
        <position position="121"/>
    </location>
    <ligand>
        <name>Zn(2+)</name>
        <dbReference type="ChEBI" id="CHEBI:29105"/>
        <note>catalytic</note>
    </ligand>
</feature>
<dbReference type="EC" id="3.1.-.-" evidence="1"/>
<dbReference type="EMBL" id="CT573326">
    <property type="protein sequence ID" value="CAK17464.1"/>
    <property type="molecule type" value="Genomic_DNA"/>
</dbReference>
<dbReference type="RefSeq" id="WP_011535826.1">
    <property type="nucleotide sequence ID" value="NC_008027.1"/>
</dbReference>
<dbReference type="SMR" id="Q1I4H2"/>
<dbReference type="STRING" id="384676.PSEEN4808"/>
<dbReference type="GeneID" id="32807767"/>
<dbReference type="KEGG" id="pen:PSEEN4808"/>
<dbReference type="eggNOG" id="COG0319">
    <property type="taxonomic scope" value="Bacteria"/>
</dbReference>
<dbReference type="HOGENOM" id="CLU_106710_0_1_6"/>
<dbReference type="OrthoDB" id="9807740at2"/>
<dbReference type="Proteomes" id="UP000000658">
    <property type="component" value="Chromosome"/>
</dbReference>
<dbReference type="GO" id="GO:0005737">
    <property type="term" value="C:cytoplasm"/>
    <property type="evidence" value="ECO:0007669"/>
    <property type="project" value="UniProtKB-SubCell"/>
</dbReference>
<dbReference type="GO" id="GO:0004222">
    <property type="term" value="F:metalloendopeptidase activity"/>
    <property type="evidence" value="ECO:0007669"/>
    <property type="project" value="InterPro"/>
</dbReference>
<dbReference type="GO" id="GO:0004521">
    <property type="term" value="F:RNA endonuclease activity"/>
    <property type="evidence" value="ECO:0007669"/>
    <property type="project" value="UniProtKB-UniRule"/>
</dbReference>
<dbReference type="GO" id="GO:0008270">
    <property type="term" value="F:zinc ion binding"/>
    <property type="evidence" value="ECO:0007669"/>
    <property type="project" value="UniProtKB-UniRule"/>
</dbReference>
<dbReference type="GO" id="GO:0006364">
    <property type="term" value="P:rRNA processing"/>
    <property type="evidence" value="ECO:0007669"/>
    <property type="project" value="UniProtKB-UniRule"/>
</dbReference>
<dbReference type="Gene3D" id="3.40.390.30">
    <property type="entry name" value="Metalloproteases ('zincins'), catalytic domain"/>
    <property type="match status" value="1"/>
</dbReference>
<dbReference type="HAMAP" id="MF_00009">
    <property type="entry name" value="Endoribonucl_YbeY"/>
    <property type="match status" value="1"/>
</dbReference>
<dbReference type="InterPro" id="IPR023091">
    <property type="entry name" value="MetalPrtase_cat_dom_sf_prd"/>
</dbReference>
<dbReference type="InterPro" id="IPR002036">
    <property type="entry name" value="YbeY"/>
</dbReference>
<dbReference type="InterPro" id="IPR020549">
    <property type="entry name" value="YbeY_CS"/>
</dbReference>
<dbReference type="NCBIfam" id="TIGR00043">
    <property type="entry name" value="rRNA maturation RNase YbeY"/>
    <property type="match status" value="1"/>
</dbReference>
<dbReference type="PANTHER" id="PTHR46986">
    <property type="entry name" value="ENDORIBONUCLEASE YBEY, CHLOROPLASTIC"/>
    <property type="match status" value="1"/>
</dbReference>
<dbReference type="PANTHER" id="PTHR46986:SF1">
    <property type="entry name" value="ENDORIBONUCLEASE YBEY, CHLOROPLASTIC"/>
    <property type="match status" value="1"/>
</dbReference>
<dbReference type="Pfam" id="PF02130">
    <property type="entry name" value="YbeY"/>
    <property type="match status" value="1"/>
</dbReference>
<dbReference type="SUPFAM" id="SSF55486">
    <property type="entry name" value="Metalloproteases ('zincins'), catalytic domain"/>
    <property type="match status" value="1"/>
</dbReference>
<dbReference type="PROSITE" id="PS01306">
    <property type="entry name" value="UPF0054"/>
    <property type="match status" value="1"/>
</dbReference>
<reference key="1">
    <citation type="journal article" date="2006" name="Nat. Biotechnol.">
        <title>Complete genome sequence of the entomopathogenic and metabolically versatile soil bacterium Pseudomonas entomophila.</title>
        <authorList>
            <person name="Vodovar N."/>
            <person name="Vallenet D."/>
            <person name="Cruveiller S."/>
            <person name="Rouy Z."/>
            <person name="Barbe V."/>
            <person name="Acosta C."/>
            <person name="Cattolico L."/>
            <person name="Jubin C."/>
            <person name="Lajus A."/>
            <person name="Segurens B."/>
            <person name="Vacherie B."/>
            <person name="Wincker P."/>
            <person name="Weissenbach J."/>
            <person name="Lemaitre B."/>
            <person name="Medigue C."/>
            <person name="Boccard F."/>
        </authorList>
    </citation>
    <scope>NUCLEOTIDE SEQUENCE [LARGE SCALE GENOMIC DNA]</scope>
    <source>
        <strain>L48</strain>
    </source>
</reference>
<sequence>MLELDLQRATDAAAPDDAAFRRWCELALRQRTADSEMTIRLVDEAEGRELNHTYRHKDYATNVLSFPADVPDDLLDIPLLGDLVICVPVVEREAREQGKALEAHWAHLVIHGCLHLLGYDHIEDDEAEEMEALERELLAELGHPDPYADDETDSITH</sequence>
<gene>
    <name evidence="1" type="primary">ybeY</name>
    <name type="ordered locus">PSEEN4808</name>
</gene>
<comment type="function">
    <text evidence="1">Single strand-specific metallo-endoribonuclease involved in late-stage 70S ribosome quality control and in maturation of the 3' terminus of the 16S rRNA.</text>
</comment>
<comment type="cofactor">
    <cofactor evidence="1">
        <name>Zn(2+)</name>
        <dbReference type="ChEBI" id="CHEBI:29105"/>
    </cofactor>
    <text evidence="1">Binds 1 zinc ion.</text>
</comment>
<comment type="subcellular location">
    <subcellularLocation>
        <location evidence="1">Cytoplasm</location>
    </subcellularLocation>
</comment>
<comment type="similarity">
    <text evidence="1">Belongs to the endoribonuclease YbeY family.</text>
</comment>
<name>YBEY_PSEE4</name>
<proteinExistence type="inferred from homology"/>
<accession>Q1I4H2</accession>
<keyword id="KW-0963">Cytoplasm</keyword>
<keyword id="KW-0255">Endonuclease</keyword>
<keyword id="KW-0378">Hydrolase</keyword>
<keyword id="KW-0479">Metal-binding</keyword>
<keyword id="KW-0540">Nuclease</keyword>
<keyword id="KW-0690">Ribosome biogenesis</keyword>
<keyword id="KW-0698">rRNA processing</keyword>
<keyword id="KW-0862">Zinc</keyword>